<dbReference type="EMBL" id="CH408155">
    <property type="protein sequence ID" value="EDK35935.2"/>
    <property type="molecule type" value="Genomic_DNA"/>
</dbReference>
<dbReference type="RefSeq" id="XP_001486656.1">
    <property type="nucleotide sequence ID" value="XM_001486606.1"/>
</dbReference>
<dbReference type="SMR" id="A5D9S8"/>
<dbReference type="FunCoup" id="A5D9S8">
    <property type="interactions" value="189"/>
</dbReference>
<dbReference type="STRING" id="294746.A5D9S8"/>
<dbReference type="GeneID" id="5129562"/>
<dbReference type="KEGG" id="pgu:PGUG_00033"/>
<dbReference type="eggNOG" id="KOG1854">
    <property type="taxonomic scope" value="Eukaryota"/>
</dbReference>
<dbReference type="HOGENOM" id="CLU_008024_2_0_1"/>
<dbReference type="InParanoid" id="A5D9S8"/>
<dbReference type="OMA" id="DYATDAY"/>
<dbReference type="OrthoDB" id="10261039at2759"/>
<dbReference type="Proteomes" id="UP000001997">
    <property type="component" value="Unassembled WGS sequence"/>
</dbReference>
<dbReference type="GO" id="GO:0061617">
    <property type="term" value="C:MICOS complex"/>
    <property type="evidence" value="ECO:0007669"/>
    <property type="project" value="TreeGrafter"/>
</dbReference>
<dbReference type="GO" id="GO:0042407">
    <property type="term" value="P:cristae formation"/>
    <property type="evidence" value="ECO:0007669"/>
    <property type="project" value="TreeGrafter"/>
</dbReference>
<dbReference type="InterPro" id="IPR019133">
    <property type="entry name" value="MIC60"/>
</dbReference>
<dbReference type="PANTHER" id="PTHR15415:SF7">
    <property type="entry name" value="MICOS COMPLEX SUBUNIT MIC60"/>
    <property type="match status" value="1"/>
</dbReference>
<dbReference type="PANTHER" id="PTHR15415">
    <property type="entry name" value="MITOFILIN"/>
    <property type="match status" value="1"/>
</dbReference>
<dbReference type="Pfam" id="PF09731">
    <property type="entry name" value="Mitofilin"/>
    <property type="match status" value="1"/>
</dbReference>
<reference key="1">
    <citation type="journal article" date="2009" name="Nature">
        <title>Evolution of pathogenicity and sexual reproduction in eight Candida genomes.</title>
        <authorList>
            <person name="Butler G."/>
            <person name="Rasmussen M.D."/>
            <person name="Lin M.F."/>
            <person name="Santos M.A.S."/>
            <person name="Sakthikumar S."/>
            <person name="Munro C.A."/>
            <person name="Rheinbay E."/>
            <person name="Grabherr M."/>
            <person name="Forche A."/>
            <person name="Reedy J.L."/>
            <person name="Agrafioti I."/>
            <person name="Arnaud M.B."/>
            <person name="Bates S."/>
            <person name="Brown A.J.P."/>
            <person name="Brunke S."/>
            <person name="Costanzo M.C."/>
            <person name="Fitzpatrick D.A."/>
            <person name="de Groot P.W.J."/>
            <person name="Harris D."/>
            <person name="Hoyer L.L."/>
            <person name="Hube B."/>
            <person name="Klis F.M."/>
            <person name="Kodira C."/>
            <person name="Lennard N."/>
            <person name="Logue M.E."/>
            <person name="Martin R."/>
            <person name="Neiman A.M."/>
            <person name="Nikolaou E."/>
            <person name="Quail M.A."/>
            <person name="Quinn J."/>
            <person name="Santos M.C."/>
            <person name="Schmitzberger F.F."/>
            <person name="Sherlock G."/>
            <person name="Shah P."/>
            <person name="Silverstein K.A.T."/>
            <person name="Skrzypek M.S."/>
            <person name="Soll D."/>
            <person name="Staggs R."/>
            <person name="Stansfield I."/>
            <person name="Stumpf M.P.H."/>
            <person name="Sudbery P.E."/>
            <person name="Srikantha T."/>
            <person name="Zeng Q."/>
            <person name="Berman J."/>
            <person name="Berriman M."/>
            <person name="Heitman J."/>
            <person name="Gow N.A.R."/>
            <person name="Lorenz M.C."/>
            <person name="Birren B.W."/>
            <person name="Kellis M."/>
            <person name="Cuomo C.A."/>
        </authorList>
    </citation>
    <scope>NUCLEOTIDE SEQUENCE [LARGE SCALE GENOMIC DNA]</scope>
    <source>
        <strain>ATCC 6260 / CBS 566 / DSM 6381 / JCM 1539 / NBRC 10279 / NRRL Y-324</strain>
    </source>
</reference>
<keyword id="KW-0175">Coiled coil</keyword>
<keyword id="KW-0472">Membrane</keyword>
<keyword id="KW-0496">Mitochondrion</keyword>
<keyword id="KW-0999">Mitochondrion inner membrane</keyword>
<keyword id="KW-1185">Reference proteome</keyword>
<keyword id="KW-0809">Transit peptide</keyword>
<keyword id="KW-0812">Transmembrane</keyword>
<keyword id="KW-1133">Transmembrane helix</keyword>
<gene>
    <name type="primary">MIC60</name>
    <name type="ORF">PGUG_00033</name>
</gene>
<sequence>MLRARFSTSRSVLTKVVTPPPVVPPVLPPPVKPPKKSFSLPKFLFSATLIGSLAYGGTLYVATKNEKVMDYVIDYQPPFYEEILRMIETGSIDEIRDAWDSLRDRISNVDFSSSKSKIDKFANDLENRGEQLIQKTRQRWGQDTAPTPHEQLQKPVETTQKSPESLPLLSYKGINESVHATVASFNELIKSIDISGPGSNDLVKAIQDNVAKLSQKVDALTASFDDELKKNLKVSQNELLSSYTKKELELTENLLHQYNTERAQLEKKLNARLEQEIASAKEAISQAAVNAVTMVRIEQTKNFEKLVKDKVDGERSGRLANLDKLSSRLDELEQFAESLEQQIVANHNRSTINRSLAELRSLISSTEGTTPKSLAPYLGQLIEAVRPINDELIDATLKEIVPLLQHESSHSILSTSQLLARWELLSPELRSASLLPPNAGLLGHFTSFVFSKLLLPVKGAKPNGKDIESVIGRVEANLVRNELDLAVEEAASLKGWPRKLADDWVVEARKRLEAEFLLGLIEGEVRSL</sequence>
<name>MIC60_PICGU</name>
<feature type="transit peptide" description="Mitochondrion" evidence="2">
    <location>
        <begin position="1"/>
        <end status="unknown"/>
    </location>
</feature>
<feature type="chain" id="PRO_0000406669" description="MICOS complex subunit MIC60">
    <location>
        <begin status="unknown"/>
        <end position="528"/>
    </location>
</feature>
<feature type="topological domain" description="Mitochondrial matrix" evidence="2">
    <location>
        <begin status="unknown"/>
        <end position="42"/>
    </location>
</feature>
<feature type="transmembrane region" description="Helical" evidence="2">
    <location>
        <begin position="43"/>
        <end position="62"/>
    </location>
</feature>
<feature type="topological domain" description="Mitochondrial intermembrane" evidence="2">
    <location>
        <begin position="63"/>
        <end position="528"/>
    </location>
</feature>
<feature type="region of interest" description="Disordered" evidence="3">
    <location>
        <begin position="136"/>
        <end position="164"/>
    </location>
</feature>
<feature type="coiled-coil region" evidence="2">
    <location>
        <begin position="199"/>
        <end position="349"/>
    </location>
</feature>
<feature type="compositionally biased region" description="Polar residues" evidence="3">
    <location>
        <begin position="136"/>
        <end position="145"/>
    </location>
</feature>
<accession>A5D9S8</accession>
<evidence type="ECO:0000250" key="1"/>
<evidence type="ECO:0000255" key="2"/>
<evidence type="ECO:0000256" key="3">
    <source>
        <dbReference type="SAM" id="MobiDB-lite"/>
    </source>
</evidence>
<evidence type="ECO:0000305" key="4"/>
<protein>
    <recommendedName>
        <fullName>MICOS complex subunit MIC60</fullName>
    </recommendedName>
    <alternativeName>
        <fullName>Mitofilin</fullName>
    </alternativeName>
</protein>
<proteinExistence type="inferred from homology"/>
<comment type="function">
    <text evidence="1">Component of the MICOS complex, a large protein complex of the mitochondrial inner membrane that plays crucial roles in the maintenance of crista junctions, inner membrane architecture, and formation of contact sites to the outer membrane. Plays a role in keeping cristae membranes connected to the inner boundary membrane. Also promotes protein import via the mitochondrial intermembrane space assembly (MIA) pathway (By similarity).</text>
</comment>
<comment type="subunit">
    <text evidence="1">Component of the mitochondrial contact site and cristae organizing system (MICOS) complex.</text>
</comment>
<comment type="subcellular location">
    <subcellularLocation>
        <location evidence="1">Mitochondrion inner membrane</location>
        <topology evidence="1">Single-pass membrane protein</topology>
    </subcellularLocation>
</comment>
<comment type="similarity">
    <text evidence="4">Belongs to the MICOS complex subunit Mic60 family.</text>
</comment>
<organism>
    <name type="scientific">Meyerozyma guilliermondii (strain ATCC 6260 / CBS 566 / DSM 6381 / JCM 1539 / NBRC 10279 / NRRL Y-324)</name>
    <name type="common">Yeast</name>
    <name type="synonym">Candida guilliermondii</name>
    <dbReference type="NCBI Taxonomy" id="294746"/>
    <lineage>
        <taxon>Eukaryota</taxon>
        <taxon>Fungi</taxon>
        <taxon>Dikarya</taxon>
        <taxon>Ascomycota</taxon>
        <taxon>Saccharomycotina</taxon>
        <taxon>Pichiomycetes</taxon>
        <taxon>Debaryomycetaceae</taxon>
        <taxon>Meyerozyma</taxon>
    </lineage>
</organism>